<organism>
    <name type="scientific">Arabidopsis thaliana</name>
    <name type="common">Mouse-ear cress</name>
    <dbReference type="NCBI Taxonomy" id="3702"/>
    <lineage>
        <taxon>Eukaryota</taxon>
        <taxon>Viridiplantae</taxon>
        <taxon>Streptophyta</taxon>
        <taxon>Embryophyta</taxon>
        <taxon>Tracheophyta</taxon>
        <taxon>Spermatophyta</taxon>
        <taxon>Magnoliopsida</taxon>
        <taxon>eudicotyledons</taxon>
        <taxon>Gunneridae</taxon>
        <taxon>Pentapetalae</taxon>
        <taxon>rosids</taxon>
        <taxon>malvids</taxon>
        <taxon>Brassicales</taxon>
        <taxon>Brassicaceae</taxon>
        <taxon>Camelineae</taxon>
        <taxon>Arabidopsis</taxon>
    </lineage>
</organism>
<accession>Q9S7R4</accession>
<accession>A4FVT1</accession>
<evidence type="ECO:0000255" key="1"/>
<evidence type="ECO:0000269" key="2">
    <source>
    </source>
</evidence>
<evidence type="ECO:0000303" key="3">
    <source ref="3"/>
</evidence>
<evidence type="ECO:0000305" key="4"/>
<comment type="function">
    <text evidence="2">Required for the trans-splicing of intron 1 of the mitochondrial nad1 transcript encoding the ND1 subunit of the mitochondrial membrane respiratory chain NADH dehydrogenase (Complex I).</text>
</comment>
<comment type="subcellular location">
    <subcellularLocation>
        <location evidence="4">Mitochondrion</location>
    </subcellularLocation>
</comment>
<comment type="alternative products">
    <event type="alternative splicing"/>
    <isoform>
        <id>Q9S7R4-1</id>
        <name>1</name>
        <sequence type="displayed"/>
    </isoform>
    <isoform>
        <id>Q9S7R4-2</id>
        <name>2</name>
        <sequence type="described" ref="VSP_034551"/>
    </isoform>
</comment>
<comment type="similarity">
    <text evidence="4">Belongs to the PPR family. P subfamily.</text>
</comment>
<comment type="online information" name="Pentatricopeptide repeat proteins">
    <link uri="https://ppr.plantenergy.uwa.edu.au"/>
</comment>
<dbReference type="EMBL" id="AC008263">
    <property type="protein sequence ID" value="AAD55286.1"/>
    <property type="molecule type" value="Genomic_DNA"/>
</dbReference>
<dbReference type="EMBL" id="AC013258">
    <property type="protein sequence ID" value="AAG51911.1"/>
    <property type="molecule type" value="Genomic_DNA"/>
</dbReference>
<dbReference type="EMBL" id="CP002684">
    <property type="protein sequence ID" value="AEE35645.1"/>
    <property type="molecule type" value="Genomic_DNA"/>
</dbReference>
<dbReference type="EMBL" id="BT030379">
    <property type="protein sequence ID" value="ABO38792.1"/>
    <property type="molecule type" value="mRNA"/>
</dbReference>
<dbReference type="PIR" id="F96778">
    <property type="entry name" value="F96778"/>
</dbReference>
<dbReference type="RefSeq" id="NP_177628.2">
    <molecule id="Q9S7R4-2"/>
    <property type="nucleotide sequence ID" value="NM_106148.2"/>
</dbReference>
<dbReference type="SMR" id="Q9S7R4"/>
<dbReference type="FunCoup" id="Q9S7R4">
    <property type="interactions" value="130"/>
</dbReference>
<dbReference type="STRING" id="3702.Q9S7R4"/>
<dbReference type="PaxDb" id="3702-AT1G74900.1"/>
<dbReference type="EnsemblPlants" id="AT1G74900.1">
    <molecule id="Q9S7R4-2"/>
    <property type="protein sequence ID" value="AT1G74900.1"/>
    <property type="gene ID" value="AT1G74900"/>
</dbReference>
<dbReference type="GeneID" id="843829"/>
<dbReference type="Gramene" id="AT1G74900.1">
    <molecule id="Q9S7R4-2"/>
    <property type="protein sequence ID" value="AT1G74900.1"/>
    <property type="gene ID" value="AT1G74900"/>
</dbReference>
<dbReference type="KEGG" id="ath:AT1G74900"/>
<dbReference type="Araport" id="AT1G74900"/>
<dbReference type="TAIR" id="AT1G74900">
    <property type="gene designation" value="OTP43"/>
</dbReference>
<dbReference type="eggNOG" id="KOG4197">
    <property type="taxonomic scope" value="Eukaryota"/>
</dbReference>
<dbReference type="HOGENOM" id="CLU_002706_49_20_1"/>
<dbReference type="InParanoid" id="Q9S7R4"/>
<dbReference type="OMA" id="NVVIRYY"/>
<dbReference type="OrthoDB" id="185373at2759"/>
<dbReference type="PhylomeDB" id="Q9S7R4"/>
<dbReference type="PRO" id="PR:Q9S7R4"/>
<dbReference type="Proteomes" id="UP000006548">
    <property type="component" value="Chromosome 1"/>
</dbReference>
<dbReference type="ExpressionAtlas" id="Q9S7R4">
    <property type="expression patterns" value="baseline and differential"/>
</dbReference>
<dbReference type="GO" id="GO:0005739">
    <property type="term" value="C:mitochondrion"/>
    <property type="evidence" value="ECO:0007669"/>
    <property type="project" value="UniProtKB-SubCell"/>
</dbReference>
<dbReference type="GO" id="GO:0008380">
    <property type="term" value="P:RNA splicing"/>
    <property type="evidence" value="ECO:0000316"/>
    <property type="project" value="TAIR"/>
</dbReference>
<dbReference type="FunFam" id="1.25.40.10:FF:002385">
    <property type="entry name" value="Predicted protein"/>
    <property type="match status" value="1"/>
</dbReference>
<dbReference type="Gene3D" id="1.25.40.10">
    <property type="entry name" value="Tetratricopeptide repeat domain"/>
    <property type="match status" value="3"/>
</dbReference>
<dbReference type="InterPro" id="IPR002885">
    <property type="entry name" value="Pentatricopeptide_rpt"/>
</dbReference>
<dbReference type="InterPro" id="IPR011990">
    <property type="entry name" value="TPR-like_helical_dom_sf"/>
</dbReference>
<dbReference type="NCBIfam" id="TIGR00756">
    <property type="entry name" value="PPR"/>
    <property type="match status" value="8"/>
</dbReference>
<dbReference type="PANTHER" id="PTHR47447">
    <property type="entry name" value="OS03G0856100 PROTEIN"/>
    <property type="match status" value="1"/>
</dbReference>
<dbReference type="PANTHER" id="PTHR47447:SF28">
    <property type="entry name" value="PENTACOTRIPEPTIDE-REPEAT REGION OF PRORP DOMAIN-CONTAINING PROTEIN"/>
    <property type="match status" value="1"/>
</dbReference>
<dbReference type="Pfam" id="PF01535">
    <property type="entry name" value="PPR"/>
    <property type="match status" value="1"/>
</dbReference>
<dbReference type="Pfam" id="PF12854">
    <property type="entry name" value="PPR_1"/>
    <property type="match status" value="1"/>
</dbReference>
<dbReference type="Pfam" id="PF13041">
    <property type="entry name" value="PPR_2"/>
    <property type="match status" value="3"/>
</dbReference>
<dbReference type="SUPFAM" id="SSF81901">
    <property type="entry name" value="HCP-like"/>
    <property type="match status" value="1"/>
</dbReference>
<dbReference type="PROSITE" id="PS51375">
    <property type="entry name" value="PPR"/>
    <property type="match status" value="11"/>
</dbReference>
<feature type="transit peptide" description="Mitochondrion" evidence="1">
    <location>
        <begin position="1"/>
        <end status="unknown"/>
    </location>
</feature>
<feature type="chain" id="PRO_0000342866" description="Pentatricopeptide repeat-containing protein At1g74900, mitochondrial">
    <location>
        <begin status="unknown"/>
        <end position="482"/>
    </location>
</feature>
<feature type="repeat" description="PPR 1">
    <location>
        <begin position="90"/>
        <end position="124"/>
    </location>
</feature>
<feature type="repeat" description="PPR 2">
    <location>
        <begin position="125"/>
        <end position="159"/>
    </location>
</feature>
<feature type="repeat" description="PPR 3">
    <location>
        <begin position="160"/>
        <end position="190"/>
    </location>
</feature>
<feature type="repeat" description="PPR 4">
    <location>
        <begin position="194"/>
        <end position="228"/>
    </location>
</feature>
<feature type="repeat" description="PPR 5">
    <location>
        <begin position="229"/>
        <end position="263"/>
    </location>
</feature>
<feature type="repeat" description="PPR 6">
    <location>
        <begin position="264"/>
        <end position="298"/>
    </location>
</feature>
<feature type="repeat" description="PPR 7">
    <location>
        <begin position="299"/>
        <end position="333"/>
    </location>
</feature>
<feature type="repeat" description="PPR 8">
    <location>
        <begin position="334"/>
        <end position="368"/>
    </location>
</feature>
<feature type="repeat" description="PPR 9">
    <location>
        <begin position="369"/>
        <end position="403"/>
    </location>
</feature>
<feature type="repeat" description="PPR 10">
    <location>
        <begin position="404"/>
        <end position="441"/>
    </location>
</feature>
<feature type="repeat" description="PPR 11">
    <location>
        <begin position="442"/>
        <end position="476"/>
    </location>
</feature>
<feature type="splice variant" id="VSP_034551" description="In isoform 2." evidence="3">
    <location>
        <begin position="429"/>
        <end position="457"/>
    </location>
</feature>
<proteinExistence type="evidence at transcript level"/>
<name>PP125_ARATH</name>
<keyword id="KW-0025">Alternative splicing</keyword>
<keyword id="KW-0496">Mitochondrion</keyword>
<keyword id="KW-1185">Reference proteome</keyword>
<keyword id="KW-0677">Repeat</keyword>
<keyword id="KW-0809">Transit peptide</keyword>
<reference key="1">
    <citation type="journal article" date="2000" name="Nature">
        <title>Sequence and analysis of chromosome 1 of the plant Arabidopsis thaliana.</title>
        <authorList>
            <person name="Theologis A."/>
            <person name="Ecker J.R."/>
            <person name="Palm C.J."/>
            <person name="Federspiel N.A."/>
            <person name="Kaul S."/>
            <person name="White O."/>
            <person name="Alonso J."/>
            <person name="Altafi H."/>
            <person name="Araujo R."/>
            <person name="Bowman C.L."/>
            <person name="Brooks S.Y."/>
            <person name="Buehler E."/>
            <person name="Chan A."/>
            <person name="Chao Q."/>
            <person name="Chen H."/>
            <person name="Cheuk R.F."/>
            <person name="Chin C.W."/>
            <person name="Chung M.K."/>
            <person name="Conn L."/>
            <person name="Conway A.B."/>
            <person name="Conway A.R."/>
            <person name="Creasy T.H."/>
            <person name="Dewar K."/>
            <person name="Dunn P."/>
            <person name="Etgu P."/>
            <person name="Feldblyum T.V."/>
            <person name="Feng J.-D."/>
            <person name="Fong B."/>
            <person name="Fujii C.Y."/>
            <person name="Gill J.E."/>
            <person name="Goldsmith A.D."/>
            <person name="Haas B."/>
            <person name="Hansen N.F."/>
            <person name="Hughes B."/>
            <person name="Huizar L."/>
            <person name="Hunter J.L."/>
            <person name="Jenkins J."/>
            <person name="Johnson-Hopson C."/>
            <person name="Khan S."/>
            <person name="Khaykin E."/>
            <person name="Kim C.J."/>
            <person name="Koo H.L."/>
            <person name="Kremenetskaia I."/>
            <person name="Kurtz D.B."/>
            <person name="Kwan A."/>
            <person name="Lam B."/>
            <person name="Langin-Hooper S."/>
            <person name="Lee A."/>
            <person name="Lee J.M."/>
            <person name="Lenz C.A."/>
            <person name="Li J.H."/>
            <person name="Li Y.-P."/>
            <person name="Lin X."/>
            <person name="Liu S.X."/>
            <person name="Liu Z.A."/>
            <person name="Luros J.S."/>
            <person name="Maiti R."/>
            <person name="Marziali A."/>
            <person name="Militscher J."/>
            <person name="Miranda M."/>
            <person name="Nguyen M."/>
            <person name="Nierman W.C."/>
            <person name="Osborne B.I."/>
            <person name="Pai G."/>
            <person name="Peterson J."/>
            <person name="Pham P.K."/>
            <person name="Rizzo M."/>
            <person name="Rooney T."/>
            <person name="Rowley D."/>
            <person name="Sakano H."/>
            <person name="Salzberg S.L."/>
            <person name="Schwartz J.R."/>
            <person name="Shinn P."/>
            <person name="Southwick A.M."/>
            <person name="Sun H."/>
            <person name="Tallon L.J."/>
            <person name="Tambunga G."/>
            <person name="Toriumi M.J."/>
            <person name="Town C.D."/>
            <person name="Utterback T."/>
            <person name="Van Aken S."/>
            <person name="Vaysberg M."/>
            <person name="Vysotskaia V.S."/>
            <person name="Walker M."/>
            <person name="Wu D."/>
            <person name="Yu G."/>
            <person name="Fraser C.M."/>
            <person name="Venter J.C."/>
            <person name="Davis R.W."/>
        </authorList>
    </citation>
    <scope>NUCLEOTIDE SEQUENCE [LARGE SCALE GENOMIC DNA]</scope>
    <source>
        <strain>cv. Columbia</strain>
    </source>
</reference>
<reference key="2">
    <citation type="journal article" date="2017" name="Plant J.">
        <title>Araport11: a complete reannotation of the Arabidopsis thaliana reference genome.</title>
        <authorList>
            <person name="Cheng C.Y."/>
            <person name="Krishnakumar V."/>
            <person name="Chan A.P."/>
            <person name="Thibaud-Nissen F."/>
            <person name="Schobel S."/>
            <person name="Town C.D."/>
        </authorList>
    </citation>
    <scope>GENOME REANNOTATION</scope>
    <source>
        <strain>cv. Columbia</strain>
    </source>
</reference>
<reference key="3">
    <citation type="submission" date="2007-03" db="EMBL/GenBank/DDBJ databases">
        <title>Arabidopsis ORF clones.</title>
        <authorList>
            <person name="Bautista V.R."/>
            <person name="Kim C.J."/>
            <person name="Chen H."/>
            <person name="Wu S.Y."/>
            <person name="De Los Reyes C."/>
            <person name="Ecker J.R."/>
        </authorList>
    </citation>
    <scope>NUCLEOTIDE SEQUENCE [LARGE SCALE MRNA] (ISOFORM 2)</scope>
    <source>
        <strain>cv. Columbia</strain>
    </source>
</reference>
<reference key="4">
    <citation type="journal article" date="2004" name="Plant Cell">
        <title>Genome-wide analysis of Arabidopsis pentatricopeptide repeat proteins reveals their essential role in organelle biogenesis.</title>
        <authorList>
            <person name="Lurin C."/>
            <person name="Andres C."/>
            <person name="Aubourg S."/>
            <person name="Bellaoui M."/>
            <person name="Bitton F."/>
            <person name="Bruyere C."/>
            <person name="Caboche M."/>
            <person name="Debast C."/>
            <person name="Gualberto J."/>
            <person name="Hoffmann B."/>
            <person name="Lecharny A."/>
            <person name="Le Ret M."/>
            <person name="Martin-Magniette M.-L."/>
            <person name="Mireau H."/>
            <person name="Peeters N."/>
            <person name="Renou J.-P."/>
            <person name="Szurek B."/>
            <person name="Taconnat L."/>
            <person name="Small I."/>
        </authorList>
    </citation>
    <scope>GENE FAMILY</scope>
</reference>
<reference key="5">
    <citation type="journal article" date="2007" name="Plant Cell">
        <title>The pentatricopeptide repeat gene OTP43 is required for trans-splicing of the mitochondrial nad1 intron 1 in Arabidopsis thaliana.</title>
        <authorList>
            <person name="de Longevialle A.F."/>
            <person name="Meyer E.H."/>
            <person name="Andres C."/>
            <person name="Taylor N.L."/>
            <person name="Lurin C."/>
            <person name="Millar A.H."/>
            <person name="Small I.D."/>
        </authorList>
    </citation>
    <scope>FUNCTION</scope>
</reference>
<protein>
    <recommendedName>
        <fullName>Pentatricopeptide repeat-containing protein At1g74900, mitochondrial</fullName>
    </recommendedName>
    <alternativeName>
        <fullName>Protein ORGANELLE TRANSCRIPT PROCESSING DEFECT 43</fullName>
    </alternativeName>
</protein>
<sequence length="482" mass="55082">MKRLFSKSLCTSAAGANLKPPPADSAAIAKLILSSPNTTHQDDQFLLSTKTTPWTPNLVNSVLKRLWNHGPKALQFFHFLDNHHREYVHDASSFDLAIDIAARLHLHPTVWSLIHRMRSLRIGPSPKTFAIVAERYASAGKPDKAVKLFLNMHEHGCFQDLASFNTILDVLCKSKRVEKAYELFRALRGRFSVDTVTYNVILNGWCLIKRTPKALEVLKEMVERGINPNLTTYNTMLKGFFRAGQIRHAWEFFLEMKKRDCEIDVVTYTTVVHGFGVAGEIKRARNVFDEMIREGVLPSVATYNAMIQVLCKKDNVENAVVMFEEMVRRGYEPNVTTYNVLIRGLFHAGEFSRGEELMQRMENEGCEPNFQTYNMMIRYYSECSEVEKALGLFEKMGSGDCLPNLDTYNILISGMFVRKRSEDMVVAGKLLLEMVERGFIPRKFTFNRVLNGLLLTGNQAFAKEILRLQSKSGSRLLRKFRL</sequence>
<gene>
    <name type="primary">OTP43</name>
    <name type="ordered locus">At1g74900</name>
    <name type="ORF">F25A4.13</name>
    <name type="ORF">F9E10.25</name>
</gene>